<feature type="chain" id="PRO_1000022240" description="Potassium-transporting ATPase potassium-binding subunit">
    <location>
        <begin position="1"/>
        <end position="564"/>
    </location>
</feature>
<feature type="transmembrane region" description="Helical" evidence="1">
    <location>
        <begin position="4"/>
        <end position="24"/>
    </location>
</feature>
<feature type="transmembrane region" description="Helical" evidence="1">
    <location>
        <begin position="67"/>
        <end position="87"/>
    </location>
</feature>
<feature type="transmembrane region" description="Helical" evidence="1">
    <location>
        <begin position="135"/>
        <end position="155"/>
    </location>
</feature>
<feature type="transmembrane region" description="Helical" evidence="1">
    <location>
        <begin position="179"/>
        <end position="199"/>
    </location>
</feature>
<feature type="transmembrane region" description="Helical" evidence="1">
    <location>
        <begin position="258"/>
        <end position="278"/>
    </location>
</feature>
<feature type="transmembrane region" description="Helical" evidence="1">
    <location>
        <begin position="286"/>
        <end position="306"/>
    </location>
</feature>
<feature type="transmembrane region" description="Helical" evidence="1">
    <location>
        <begin position="382"/>
        <end position="402"/>
    </location>
</feature>
<feature type="transmembrane region" description="Helical" evidence="1">
    <location>
        <begin position="420"/>
        <end position="440"/>
    </location>
</feature>
<feature type="transmembrane region" description="Helical" evidence="1">
    <location>
        <begin position="487"/>
        <end position="507"/>
    </location>
</feature>
<feature type="transmembrane region" description="Helical" evidence="1">
    <location>
        <begin position="534"/>
        <end position="554"/>
    </location>
</feature>
<proteinExistence type="inferred from homology"/>
<keyword id="KW-0997">Cell inner membrane</keyword>
<keyword id="KW-1003">Cell membrane</keyword>
<keyword id="KW-0406">Ion transport</keyword>
<keyword id="KW-0472">Membrane</keyword>
<keyword id="KW-0630">Potassium</keyword>
<keyword id="KW-0633">Potassium transport</keyword>
<keyword id="KW-0812">Transmembrane</keyword>
<keyword id="KW-1133">Transmembrane helix</keyword>
<keyword id="KW-0813">Transport</keyword>
<name>KDPA_PSEE4</name>
<dbReference type="EMBL" id="CT573326">
    <property type="protein sequence ID" value="CAK16340.1"/>
    <property type="molecule type" value="Genomic_DNA"/>
</dbReference>
<dbReference type="RefSeq" id="WP_011534723.1">
    <property type="nucleotide sequence ID" value="NC_008027.1"/>
</dbReference>
<dbReference type="SMR" id="Q1I7N9"/>
<dbReference type="STRING" id="384676.PSEEN3609"/>
<dbReference type="GeneID" id="32806673"/>
<dbReference type="KEGG" id="pen:PSEEN3609"/>
<dbReference type="eggNOG" id="COG2060">
    <property type="taxonomic scope" value="Bacteria"/>
</dbReference>
<dbReference type="HOGENOM" id="CLU_018614_3_0_6"/>
<dbReference type="OrthoDB" id="9763796at2"/>
<dbReference type="Proteomes" id="UP000000658">
    <property type="component" value="Chromosome"/>
</dbReference>
<dbReference type="GO" id="GO:0005886">
    <property type="term" value="C:plasma membrane"/>
    <property type="evidence" value="ECO:0007669"/>
    <property type="project" value="UniProtKB-SubCell"/>
</dbReference>
<dbReference type="GO" id="GO:0008556">
    <property type="term" value="F:P-type potassium transmembrane transporter activity"/>
    <property type="evidence" value="ECO:0007669"/>
    <property type="project" value="InterPro"/>
</dbReference>
<dbReference type="GO" id="GO:0030955">
    <property type="term" value="F:potassium ion binding"/>
    <property type="evidence" value="ECO:0007669"/>
    <property type="project" value="UniProtKB-UniRule"/>
</dbReference>
<dbReference type="HAMAP" id="MF_00275">
    <property type="entry name" value="KdpA"/>
    <property type="match status" value="1"/>
</dbReference>
<dbReference type="InterPro" id="IPR004623">
    <property type="entry name" value="KdpA"/>
</dbReference>
<dbReference type="NCBIfam" id="TIGR00680">
    <property type="entry name" value="kdpA"/>
    <property type="match status" value="1"/>
</dbReference>
<dbReference type="PANTHER" id="PTHR30607">
    <property type="entry name" value="POTASSIUM-TRANSPORTING ATPASE A CHAIN"/>
    <property type="match status" value="1"/>
</dbReference>
<dbReference type="PANTHER" id="PTHR30607:SF2">
    <property type="entry name" value="POTASSIUM-TRANSPORTING ATPASE POTASSIUM-BINDING SUBUNIT"/>
    <property type="match status" value="1"/>
</dbReference>
<dbReference type="Pfam" id="PF03814">
    <property type="entry name" value="KdpA"/>
    <property type="match status" value="1"/>
</dbReference>
<dbReference type="PIRSF" id="PIRSF001294">
    <property type="entry name" value="K_ATPaseA"/>
    <property type="match status" value="1"/>
</dbReference>
<organism>
    <name type="scientific">Pseudomonas entomophila (strain L48)</name>
    <dbReference type="NCBI Taxonomy" id="384676"/>
    <lineage>
        <taxon>Bacteria</taxon>
        <taxon>Pseudomonadati</taxon>
        <taxon>Pseudomonadota</taxon>
        <taxon>Gammaproteobacteria</taxon>
        <taxon>Pseudomonadales</taxon>
        <taxon>Pseudomonadaceae</taxon>
        <taxon>Pseudomonas</taxon>
    </lineage>
</organism>
<gene>
    <name evidence="1" type="primary">kdpA</name>
    <name type="ordered locus">PSEEN3609</name>
</gene>
<sequence length="564" mass="59906">MHSYDYLLLLAFFAIVLLPAPWLGRFYYKVMEGQRTWLSPILGPVERGCYRLSGVNADQEQNWKQYTLALLAFNLAGFLLLFAVLLLQGSLPLNPQHLPGQEWSLAFNTAVSFMTNTNWQSYSGEASVSYLTQMIGLTVQNFVSAATGLAVLVALSRGIARRSAGTLGNFWVDLTRATLYGLLPLCLVLALLLVWQGVPQTFADYVHAVTLQGTDQTIPLGPAASQIAIKQLGTNGGGFFGVNSAHPFENPTAWSNLFEVASIILIPVALVFTFGHYVKDLRQSRAIIACMLALFLIGGSTALWSEHQPNPALESAQVRQSAPLEGKESRFGTTGSVLWTVTTTSASNGSVNAMHDSLNPLTGMVAMVNMMLGEVIFGGVGAGLYGMLLFVLIAVFLAGLMIGRTPEYLGKKLQAREVQLLVATLLVMPVGVLILGAIAASLPGPAGAVSNPGAHGFSQLLYAYTSGTANNGSAFAGFGANTTFHNVMIGLAMLIGRFGYILPVLALAGSLAAKKSAPQGLNSFPTHGPLFTTLLLLTILLVGGLTFLPTLALGPIAEHLSLGF</sequence>
<reference key="1">
    <citation type="journal article" date="2006" name="Nat. Biotechnol.">
        <title>Complete genome sequence of the entomopathogenic and metabolically versatile soil bacterium Pseudomonas entomophila.</title>
        <authorList>
            <person name="Vodovar N."/>
            <person name="Vallenet D."/>
            <person name="Cruveiller S."/>
            <person name="Rouy Z."/>
            <person name="Barbe V."/>
            <person name="Acosta C."/>
            <person name="Cattolico L."/>
            <person name="Jubin C."/>
            <person name="Lajus A."/>
            <person name="Segurens B."/>
            <person name="Vacherie B."/>
            <person name="Wincker P."/>
            <person name="Weissenbach J."/>
            <person name="Lemaitre B."/>
            <person name="Medigue C."/>
            <person name="Boccard F."/>
        </authorList>
    </citation>
    <scope>NUCLEOTIDE SEQUENCE [LARGE SCALE GENOMIC DNA]</scope>
    <source>
        <strain>L48</strain>
    </source>
</reference>
<comment type="function">
    <text evidence="1">Part of the high-affinity ATP-driven potassium transport (or Kdp) system, which catalyzes the hydrolysis of ATP coupled with the electrogenic transport of potassium into the cytoplasm. This subunit binds the periplasmic potassium ions and delivers the ions to the membrane domain of KdpB through an intramembrane tunnel.</text>
</comment>
<comment type="subunit">
    <text evidence="1">The system is composed of three essential subunits: KdpA, KdpB and KdpC.</text>
</comment>
<comment type="subcellular location">
    <subcellularLocation>
        <location evidence="1">Cell inner membrane</location>
        <topology evidence="1">Multi-pass membrane protein</topology>
    </subcellularLocation>
</comment>
<comment type="similarity">
    <text evidence="1">Belongs to the KdpA family.</text>
</comment>
<protein>
    <recommendedName>
        <fullName evidence="1">Potassium-transporting ATPase potassium-binding subunit</fullName>
    </recommendedName>
    <alternativeName>
        <fullName evidence="1">ATP phosphohydrolase [potassium-transporting] A chain</fullName>
    </alternativeName>
    <alternativeName>
        <fullName evidence="1">Potassium-binding and translocating subunit A</fullName>
    </alternativeName>
    <alternativeName>
        <fullName evidence="1">Potassium-translocating ATPase A chain</fullName>
    </alternativeName>
</protein>
<accession>Q1I7N9</accession>
<evidence type="ECO:0000255" key="1">
    <source>
        <dbReference type="HAMAP-Rule" id="MF_00275"/>
    </source>
</evidence>